<organism>
    <name type="scientific">Rattus norvegicus</name>
    <name type="common">Rat</name>
    <dbReference type="NCBI Taxonomy" id="10116"/>
    <lineage>
        <taxon>Eukaryota</taxon>
        <taxon>Metazoa</taxon>
        <taxon>Chordata</taxon>
        <taxon>Craniata</taxon>
        <taxon>Vertebrata</taxon>
        <taxon>Euteleostomi</taxon>
        <taxon>Mammalia</taxon>
        <taxon>Eutheria</taxon>
        <taxon>Euarchontoglires</taxon>
        <taxon>Glires</taxon>
        <taxon>Rodentia</taxon>
        <taxon>Myomorpha</taxon>
        <taxon>Muroidea</taxon>
        <taxon>Muridae</taxon>
        <taxon>Murinae</taxon>
        <taxon>Rattus</taxon>
    </lineage>
</organism>
<gene>
    <name type="primary">Chia</name>
</gene>
<comment type="function">
    <text evidence="1">Degrades chitin and chitotriose. May participate in the defense against nematodes, fungi and other pathogens. Plays a role in T-helper cell type 2 (Th2) immune response. Contributes to the response to IL-13 and inflammation in response to IL-13. Stimulates chemokine production by pulmonary epithelial cells. Protects lung epithelial cells against apoptosis and promotes phosphorylation of AKT1. Its function in the inflammatory response and in protecting cells against apoptosis is inhibited by allosamidin, suggesting that the function of this protein depends on carbohydrate binding (By similarity).</text>
</comment>
<comment type="catalytic activity">
    <reaction>
        <text>Random endo-hydrolysis of N-acetyl-beta-D-glucosaminide (1-&gt;4)-beta-linkages in chitin and chitodextrins.</text>
        <dbReference type="EC" id="3.2.1.14"/>
    </reaction>
</comment>
<comment type="subunit">
    <text evidence="1">Interacts with EGFR.</text>
</comment>
<comment type="subcellular location">
    <subcellularLocation>
        <location evidence="1">Cytoplasm</location>
    </subcellularLocation>
    <subcellularLocation>
        <location evidence="1">Secreted</location>
    </subcellularLocation>
</comment>
<comment type="similarity">
    <text evidence="5">Belongs to the glycosyl hydrolase 18 family. Chitinase class II subfamily.</text>
</comment>
<proteinExistence type="evidence at transcript level"/>
<evidence type="ECO:0000250" key="1"/>
<evidence type="ECO:0000255" key="2">
    <source>
        <dbReference type="PROSITE-ProRule" id="PRU00144"/>
    </source>
</evidence>
<evidence type="ECO:0000255" key="3">
    <source>
        <dbReference type="PROSITE-ProRule" id="PRU01258"/>
    </source>
</evidence>
<evidence type="ECO:0000256" key="4">
    <source>
        <dbReference type="SAM" id="MobiDB-lite"/>
    </source>
</evidence>
<evidence type="ECO:0000305" key="5"/>
<sequence>MAKLILVTGLVLLLNVQLGSAYNLVCYFTNWAQYRPGLGSFKPDDINPCLCTHLIYAFAGMQNNQITTIEWNDVTLYKAFNDLKNRNSKLKTLLAIGGWNFGTAPFTTMVSTSQNRQTFITSVIKFLRQYGFDGLDLDWEYPGSRGSPPQDKHLFTVLVKELREAFEQEAIESNRPRLMVTAAVAAGISNIQAGYEIPELSQYLDFIHVMTYDLHGSWDGYTGENSPLYKLPTETGSNAYLNVDYVMNYWKDNGAPAEKLIVGFPEYGHTYILSNPSDTGIGAPTSGNGPAGPYTRQAGFWAYYEICTFLRNGATQDWDAPQEVPYAYKGNEWVGYDNIKSFSVKAQWLKQNNFGGAMIWAIDLDDFTGSFCDQGKFPLTSTLNKALDIPTAGCTAPDLPSEPVTTPPGSGSGGGSSGGGSEGSGFCAGKADGLYPVADDRNAFWHCINGITYQQHCQAGLVFDTSCNCCNWP</sequence>
<protein>
    <recommendedName>
        <fullName>Acidic mammalian chitinase</fullName>
        <shortName>AMCase</shortName>
        <ecNumber>3.2.1.14</ecNumber>
    </recommendedName>
</protein>
<dbReference type="EC" id="3.2.1.14"/>
<dbReference type="EMBL" id="AY486074">
    <property type="protein sequence ID" value="AAR28968.1"/>
    <property type="molecule type" value="mRNA"/>
</dbReference>
<dbReference type="RefSeq" id="NP_997469.1">
    <property type="nucleotide sequence ID" value="NM_207586.2"/>
</dbReference>
<dbReference type="SMR" id="Q6RY07"/>
<dbReference type="FunCoup" id="Q6RY07">
    <property type="interactions" value="47"/>
</dbReference>
<dbReference type="STRING" id="10116.ENSRNOP00000073705"/>
<dbReference type="CAZy" id="CBM14">
    <property type="family name" value="Carbohydrate-Binding Module Family 14"/>
</dbReference>
<dbReference type="CAZy" id="GH18">
    <property type="family name" value="Glycoside Hydrolase Family 18"/>
</dbReference>
<dbReference type="PhosphoSitePlus" id="Q6RY07"/>
<dbReference type="PaxDb" id="10116-ENSRNOP00000044947"/>
<dbReference type="GeneID" id="113901"/>
<dbReference type="KEGG" id="rno:113901"/>
<dbReference type="UCSC" id="RGD:1303058">
    <property type="organism name" value="rat"/>
</dbReference>
<dbReference type="AGR" id="RGD:1303058"/>
<dbReference type="CTD" id="27159"/>
<dbReference type="RGD" id="1303058">
    <property type="gene designation" value="Chia"/>
</dbReference>
<dbReference type="eggNOG" id="KOG2806">
    <property type="taxonomic scope" value="Eukaryota"/>
</dbReference>
<dbReference type="InParanoid" id="Q6RY07"/>
<dbReference type="OrthoDB" id="60038at9989"/>
<dbReference type="PhylomeDB" id="Q6RY07"/>
<dbReference type="Reactome" id="R-RNO-189085">
    <property type="pathway name" value="Digestion of dietary carbohydrate"/>
</dbReference>
<dbReference type="PRO" id="PR:Q6RY07"/>
<dbReference type="Proteomes" id="UP000002494">
    <property type="component" value="Unplaced"/>
</dbReference>
<dbReference type="GO" id="GO:0005737">
    <property type="term" value="C:cytoplasm"/>
    <property type="evidence" value="ECO:0000250"/>
    <property type="project" value="UniProtKB"/>
</dbReference>
<dbReference type="GO" id="GO:0005576">
    <property type="term" value="C:extracellular region"/>
    <property type="evidence" value="ECO:0000314"/>
    <property type="project" value="RGD"/>
</dbReference>
<dbReference type="GO" id="GO:0005615">
    <property type="term" value="C:extracellular space"/>
    <property type="evidence" value="ECO:0000250"/>
    <property type="project" value="UniProtKB"/>
</dbReference>
<dbReference type="GO" id="GO:0008061">
    <property type="term" value="F:chitin binding"/>
    <property type="evidence" value="ECO:0000266"/>
    <property type="project" value="RGD"/>
</dbReference>
<dbReference type="GO" id="GO:0004568">
    <property type="term" value="F:chitinase activity"/>
    <property type="evidence" value="ECO:0000314"/>
    <property type="project" value="RGD"/>
</dbReference>
<dbReference type="GO" id="GO:0008843">
    <property type="term" value="F:endochitinase activity"/>
    <property type="evidence" value="ECO:0007669"/>
    <property type="project" value="UniProtKB-EC"/>
</dbReference>
<dbReference type="GO" id="GO:0019900">
    <property type="term" value="F:kinase binding"/>
    <property type="evidence" value="ECO:0000266"/>
    <property type="project" value="RGD"/>
</dbReference>
<dbReference type="GO" id="GO:0006915">
    <property type="term" value="P:apoptotic process"/>
    <property type="evidence" value="ECO:0007669"/>
    <property type="project" value="UniProtKB-KW"/>
</dbReference>
<dbReference type="GO" id="GO:0006032">
    <property type="term" value="P:chitin catabolic process"/>
    <property type="evidence" value="ECO:0000314"/>
    <property type="project" value="RGD"/>
</dbReference>
<dbReference type="GO" id="GO:0002376">
    <property type="term" value="P:immune system process"/>
    <property type="evidence" value="ECO:0007669"/>
    <property type="project" value="UniProtKB-KW"/>
</dbReference>
<dbReference type="GO" id="GO:0000272">
    <property type="term" value="P:polysaccharide catabolic process"/>
    <property type="evidence" value="ECO:0007669"/>
    <property type="project" value="UniProtKB-KW"/>
</dbReference>
<dbReference type="GO" id="GO:0032722">
    <property type="term" value="P:positive regulation of chemokine production"/>
    <property type="evidence" value="ECO:0000250"/>
    <property type="project" value="UniProtKB"/>
</dbReference>
<dbReference type="GO" id="GO:0002532">
    <property type="term" value="P:production of molecular mediator involved in inflammatory response"/>
    <property type="evidence" value="ECO:0000250"/>
    <property type="project" value="UniProtKB"/>
</dbReference>
<dbReference type="CDD" id="cd02872">
    <property type="entry name" value="GH18_chitolectin_chitotriosidase"/>
    <property type="match status" value="1"/>
</dbReference>
<dbReference type="FunFam" id="2.170.140.10:FF:000001">
    <property type="entry name" value="Acidic mammalian chitinase"/>
    <property type="match status" value="1"/>
</dbReference>
<dbReference type="FunFam" id="3.20.20.80:FF:000007">
    <property type="entry name" value="Acidic mammalian chitinase"/>
    <property type="match status" value="1"/>
</dbReference>
<dbReference type="FunFam" id="3.20.20.80:FF:000081">
    <property type="entry name" value="Chitinase 1"/>
    <property type="match status" value="1"/>
</dbReference>
<dbReference type="FunFam" id="3.10.50.10:FF:000001">
    <property type="entry name" value="Chitinase 3-like 1"/>
    <property type="match status" value="1"/>
</dbReference>
<dbReference type="Gene3D" id="3.10.50.10">
    <property type="match status" value="1"/>
</dbReference>
<dbReference type="Gene3D" id="2.170.140.10">
    <property type="entry name" value="Chitin binding domain"/>
    <property type="match status" value="1"/>
</dbReference>
<dbReference type="Gene3D" id="3.20.20.80">
    <property type="entry name" value="Glycosidases"/>
    <property type="match status" value="1"/>
</dbReference>
<dbReference type="InterPro" id="IPR002557">
    <property type="entry name" value="Chitin-bd_dom"/>
</dbReference>
<dbReference type="InterPro" id="IPR036508">
    <property type="entry name" value="Chitin-bd_dom_sf"/>
</dbReference>
<dbReference type="InterPro" id="IPR011583">
    <property type="entry name" value="Chitinase_II/V-like_cat"/>
</dbReference>
<dbReference type="InterPro" id="IPR029070">
    <property type="entry name" value="Chitinase_insertion_sf"/>
</dbReference>
<dbReference type="InterPro" id="IPR001223">
    <property type="entry name" value="Glyco_hydro18_cat"/>
</dbReference>
<dbReference type="InterPro" id="IPR001579">
    <property type="entry name" value="Glyco_hydro_18_chit_AS"/>
</dbReference>
<dbReference type="InterPro" id="IPR017853">
    <property type="entry name" value="Glycoside_hydrolase_SF"/>
</dbReference>
<dbReference type="InterPro" id="IPR050314">
    <property type="entry name" value="Glycosyl_Hydrlase_18"/>
</dbReference>
<dbReference type="PANTHER" id="PTHR11177:SF188">
    <property type="entry name" value="ACIDIC MAMMALIAN CHITINASE"/>
    <property type="match status" value="1"/>
</dbReference>
<dbReference type="PANTHER" id="PTHR11177">
    <property type="entry name" value="CHITINASE"/>
    <property type="match status" value="1"/>
</dbReference>
<dbReference type="Pfam" id="PF01607">
    <property type="entry name" value="CBM_14"/>
    <property type="match status" value="1"/>
</dbReference>
<dbReference type="Pfam" id="PF00704">
    <property type="entry name" value="Glyco_hydro_18"/>
    <property type="match status" value="1"/>
</dbReference>
<dbReference type="SMART" id="SM00494">
    <property type="entry name" value="ChtBD2"/>
    <property type="match status" value="1"/>
</dbReference>
<dbReference type="SMART" id="SM00636">
    <property type="entry name" value="Glyco_18"/>
    <property type="match status" value="1"/>
</dbReference>
<dbReference type="SUPFAM" id="SSF51445">
    <property type="entry name" value="(Trans)glycosidases"/>
    <property type="match status" value="1"/>
</dbReference>
<dbReference type="SUPFAM" id="SSF54556">
    <property type="entry name" value="Chitinase insertion domain"/>
    <property type="match status" value="1"/>
</dbReference>
<dbReference type="SUPFAM" id="SSF57625">
    <property type="entry name" value="Invertebrate chitin-binding proteins"/>
    <property type="match status" value="1"/>
</dbReference>
<dbReference type="PROSITE" id="PS50940">
    <property type="entry name" value="CHIT_BIND_II"/>
    <property type="match status" value="1"/>
</dbReference>
<dbReference type="PROSITE" id="PS01095">
    <property type="entry name" value="GH18_1"/>
    <property type="match status" value="1"/>
</dbReference>
<dbReference type="PROSITE" id="PS51910">
    <property type="entry name" value="GH18_2"/>
    <property type="match status" value="1"/>
</dbReference>
<name>CHIA_RAT</name>
<reference key="1">
    <citation type="submission" date="2003-11" db="EMBL/GenBank/DDBJ databases">
        <title>Rattus norvegicus similar to acidic mammalian chitinase precursor.</title>
        <authorList>
            <person name="Chen X.-H."/>
            <person name="Cai G.-P."/>
        </authorList>
    </citation>
    <scope>NUCLEOTIDE SEQUENCE [MRNA]</scope>
    <source>
        <strain>Sprague-Dawley</strain>
        <tissue>Stomach</tissue>
    </source>
</reference>
<accession>Q6RY07</accession>
<keyword id="KW-0053">Apoptosis</keyword>
<keyword id="KW-0119">Carbohydrate metabolism</keyword>
<keyword id="KW-0146">Chitin degradation</keyword>
<keyword id="KW-0147">Chitin-binding</keyword>
<keyword id="KW-0963">Cytoplasm</keyword>
<keyword id="KW-1015">Disulfide bond</keyword>
<keyword id="KW-0326">Glycosidase</keyword>
<keyword id="KW-0378">Hydrolase</keyword>
<keyword id="KW-0391">Immunity</keyword>
<keyword id="KW-0395">Inflammatory response</keyword>
<keyword id="KW-0624">Polysaccharide degradation</keyword>
<keyword id="KW-1185">Reference proteome</keyword>
<keyword id="KW-0964">Secreted</keyword>
<keyword id="KW-0732">Signal</keyword>
<feature type="signal peptide" evidence="1">
    <location>
        <begin position="1"/>
        <end position="21"/>
    </location>
</feature>
<feature type="chain" id="PRO_0000011946" description="Acidic mammalian chitinase">
    <location>
        <begin position="22"/>
        <end position="473"/>
    </location>
</feature>
<feature type="domain" description="GH18" evidence="3">
    <location>
        <begin position="22"/>
        <end position="390"/>
    </location>
</feature>
<feature type="domain" description="Chitin-binding type-2" evidence="2">
    <location>
        <begin position="424"/>
        <end position="473"/>
    </location>
</feature>
<feature type="region of interest" description="Disordered" evidence="4">
    <location>
        <begin position="395"/>
        <end position="421"/>
    </location>
</feature>
<feature type="compositionally biased region" description="Gly residues" evidence="4">
    <location>
        <begin position="410"/>
        <end position="421"/>
    </location>
</feature>
<feature type="active site" description="Proton donor" evidence="3">
    <location>
        <position position="140"/>
    </location>
</feature>
<feature type="binding site" evidence="3">
    <location>
        <begin position="70"/>
        <end position="71"/>
    </location>
    <ligand>
        <name>chitin</name>
        <dbReference type="ChEBI" id="CHEBI:17029"/>
    </ligand>
</feature>
<feature type="binding site" evidence="3">
    <location>
        <begin position="97"/>
        <end position="100"/>
    </location>
    <ligand>
        <name>chitin</name>
        <dbReference type="ChEBI" id="CHEBI:17029"/>
    </ligand>
</feature>
<feature type="binding site" evidence="3">
    <location>
        <position position="141"/>
    </location>
    <ligand>
        <name>chitin</name>
        <dbReference type="ChEBI" id="CHEBI:17029"/>
    </ligand>
</feature>
<feature type="binding site" evidence="3">
    <location>
        <begin position="210"/>
        <end position="213"/>
    </location>
    <ligand>
        <name>chitin</name>
        <dbReference type="ChEBI" id="CHEBI:17029"/>
    </ligand>
</feature>
<feature type="binding site" evidence="3">
    <location>
        <position position="360"/>
    </location>
    <ligand>
        <name>chitin</name>
        <dbReference type="ChEBI" id="CHEBI:17029"/>
    </ligand>
</feature>
<feature type="disulfide bond" evidence="3">
    <location>
        <begin position="26"/>
        <end position="51"/>
    </location>
</feature>
<feature type="disulfide bond" evidence="2">
    <location>
        <begin position="49"/>
        <end position="394"/>
    </location>
</feature>
<feature type="disulfide bond" evidence="2">
    <location>
        <begin position="307"/>
        <end position="372"/>
    </location>
</feature>
<feature type="disulfide bond" evidence="2">
    <location>
        <begin position="457"/>
        <end position="470"/>
    </location>
</feature>